<evidence type="ECO:0000255" key="1">
    <source>
        <dbReference type="HAMAP-Rule" id="MF_01007"/>
    </source>
</evidence>
<reference key="1">
    <citation type="journal article" date="2005" name="Nat. Genet.">
        <title>The complete genome sequence of Francisella tularensis, the causative agent of tularemia.</title>
        <authorList>
            <person name="Larsson P."/>
            <person name="Oyston P.C.F."/>
            <person name="Chain P."/>
            <person name="Chu M.C."/>
            <person name="Duffield M."/>
            <person name="Fuxelius H.-H."/>
            <person name="Garcia E."/>
            <person name="Haelltorp G."/>
            <person name="Johansson D."/>
            <person name="Isherwood K.E."/>
            <person name="Karp P.D."/>
            <person name="Larsson E."/>
            <person name="Liu Y."/>
            <person name="Michell S."/>
            <person name="Prior J."/>
            <person name="Prior R."/>
            <person name="Malfatti S."/>
            <person name="Sjoestedt A."/>
            <person name="Svensson K."/>
            <person name="Thompson N."/>
            <person name="Vergez L."/>
            <person name="Wagg J.K."/>
            <person name="Wren B.W."/>
            <person name="Lindler L.E."/>
            <person name="Andersson S.G.E."/>
            <person name="Forsman M."/>
            <person name="Titball R.W."/>
        </authorList>
    </citation>
    <scope>NUCLEOTIDE SEQUENCE [LARGE SCALE GENOMIC DNA]</scope>
    <source>
        <strain>SCHU S4 / Schu 4</strain>
    </source>
</reference>
<proteinExistence type="inferred from homology"/>
<accession>Q5NGY1</accession>
<protein>
    <recommendedName>
        <fullName evidence="1">Ribosomal RNA small subunit methyltransferase H</fullName>
        <ecNumber evidence="1">2.1.1.199</ecNumber>
    </recommendedName>
    <alternativeName>
        <fullName evidence="1">16S rRNA m(4)C1402 methyltransferase</fullName>
    </alternativeName>
    <alternativeName>
        <fullName evidence="1">rRNA (cytosine-N(4)-)-methyltransferase RsmH</fullName>
    </alternativeName>
</protein>
<comment type="function">
    <text evidence="1">Specifically methylates the N4 position of cytidine in position 1402 (C1402) of 16S rRNA.</text>
</comment>
<comment type="catalytic activity">
    <reaction evidence="1">
        <text>cytidine(1402) in 16S rRNA + S-adenosyl-L-methionine = N(4)-methylcytidine(1402) in 16S rRNA + S-adenosyl-L-homocysteine + H(+)</text>
        <dbReference type="Rhea" id="RHEA:42928"/>
        <dbReference type="Rhea" id="RHEA-COMP:10286"/>
        <dbReference type="Rhea" id="RHEA-COMP:10287"/>
        <dbReference type="ChEBI" id="CHEBI:15378"/>
        <dbReference type="ChEBI" id="CHEBI:57856"/>
        <dbReference type="ChEBI" id="CHEBI:59789"/>
        <dbReference type="ChEBI" id="CHEBI:74506"/>
        <dbReference type="ChEBI" id="CHEBI:82748"/>
        <dbReference type="EC" id="2.1.1.199"/>
    </reaction>
</comment>
<comment type="subcellular location">
    <subcellularLocation>
        <location evidence="1">Cytoplasm</location>
    </subcellularLocation>
</comment>
<comment type="similarity">
    <text evidence="1">Belongs to the methyltransferase superfamily. RsmH family.</text>
</comment>
<sequence length="305" mass="34422">MHYSVLLQESINDLNINPQGIYIDATFGRGGHSKAILNRLTTGRLIAFDKDLDAISYARENFQFSNFEIVHASFASIYDYCLQHSLLGKIDGIIMDLGVSSPQLDNAARGFSFTHNGPLDMRMDVSKGITASQALEELSVDDLSYIFKVYGEERFAKKIALRIKDYIQQNGSIRKTLELAELILATIGKKEKKNPATRCFQALRIYVNNELKDLEALLENILAVIKSGGRIAAISFHSLEDRIVKQKFSALINPKQELNRITKMLPQDSSQIKLKWITKKSKANEDELNQNVRSRSAILRVVEKL</sequence>
<keyword id="KW-0963">Cytoplasm</keyword>
<keyword id="KW-0489">Methyltransferase</keyword>
<keyword id="KW-1185">Reference proteome</keyword>
<keyword id="KW-0698">rRNA processing</keyword>
<keyword id="KW-0949">S-adenosyl-L-methionine</keyword>
<keyword id="KW-0808">Transferase</keyword>
<feature type="chain" id="PRO_0000108628" description="Ribosomal RNA small subunit methyltransferase H">
    <location>
        <begin position="1"/>
        <end position="305"/>
    </location>
</feature>
<feature type="binding site" evidence="1">
    <location>
        <begin position="30"/>
        <end position="32"/>
    </location>
    <ligand>
        <name>S-adenosyl-L-methionine</name>
        <dbReference type="ChEBI" id="CHEBI:59789"/>
    </ligand>
</feature>
<feature type="binding site" evidence="1">
    <location>
        <position position="49"/>
    </location>
    <ligand>
        <name>S-adenosyl-L-methionine</name>
        <dbReference type="ChEBI" id="CHEBI:59789"/>
    </ligand>
</feature>
<feature type="binding site" evidence="1">
    <location>
        <position position="74"/>
    </location>
    <ligand>
        <name>S-adenosyl-L-methionine</name>
        <dbReference type="ChEBI" id="CHEBI:59789"/>
    </ligand>
</feature>
<feature type="binding site" evidence="1">
    <location>
        <position position="96"/>
    </location>
    <ligand>
        <name>S-adenosyl-L-methionine</name>
        <dbReference type="ChEBI" id="CHEBI:59789"/>
    </ligand>
</feature>
<feature type="binding site" evidence="1">
    <location>
        <position position="103"/>
    </location>
    <ligand>
        <name>S-adenosyl-L-methionine</name>
        <dbReference type="ChEBI" id="CHEBI:59789"/>
    </ligand>
</feature>
<name>RSMH_FRATT</name>
<organism>
    <name type="scientific">Francisella tularensis subsp. tularensis (strain SCHU S4 / Schu 4)</name>
    <dbReference type="NCBI Taxonomy" id="177416"/>
    <lineage>
        <taxon>Bacteria</taxon>
        <taxon>Pseudomonadati</taxon>
        <taxon>Pseudomonadota</taxon>
        <taxon>Gammaproteobacteria</taxon>
        <taxon>Thiotrichales</taxon>
        <taxon>Francisellaceae</taxon>
        <taxon>Francisella</taxon>
    </lineage>
</organism>
<dbReference type="EC" id="2.1.1.199" evidence="1"/>
<dbReference type="EMBL" id="AJ749949">
    <property type="protein sequence ID" value="CAG45328.1"/>
    <property type="molecule type" value="Genomic_DNA"/>
</dbReference>
<dbReference type="RefSeq" id="WP_003020492.1">
    <property type="nucleotide sequence ID" value="NC_006570.2"/>
</dbReference>
<dbReference type="RefSeq" id="YP_169711.1">
    <property type="nucleotide sequence ID" value="NC_006570.2"/>
</dbReference>
<dbReference type="SMR" id="Q5NGY1"/>
<dbReference type="IntAct" id="Q5NGY1">
    <property type="interactions" value="1"/>
</dbReference>
<dbReference type="STRING" id="177416.FTT_0695"/>
<dbReference type="DNASU" id="3191607"/>
<dbReference type="EnsemblBacteria" id="CAG45328">
    <property type="protein sequence ID" value="CAG45328"/>
    <property type="gene ID" value="FTT_0695"/>
</dbReference>
<dbReference type="KEGG" id="ftu:FTT_0695"/>
<dbReference type="eggNOG" id="COG0275">
    <property type="taxonomic scope" value="Bacteria"/>
</dbReference>
<dbReference type="OrthoDB" id="9806637at2"/>
<dbReference type="Proteomes" id="UP000001174">
    <property type="component" value="Chromosome"/>
</dbReference>
<dbReference type="GO" id="GO:0005737">
    <property type="term" value="C:cytoplasm"/>
    <property type="evidence" value="ECO:0007669"/>
    <property type="project" value="UniProtKB-SubCell"/>
</dbReference>
<dbReference type="GO" id="GO:0071424">
    <property type="term" value="F:rRNA (cytosine-N4-)-methyltransferase activity"/>
    <property type="evidence" value="ECO:0007669"/>
    <property type="project" value="UniProtKB-UniRule"/>
</dbReference>
<dbReference type="GO" id="GO:0070475">
    <property type="term" value="P:rRNA base methylation"/>
    <property type="evidence" value="ECO:0007669"/>
    <property type="project" value="UniProtKB-UniRule"/>
</dbReference>
<dbReference type="Gene3D" id="1.10.150.170">
    <property type="entry name" value="Putative methyltransferase TM0872, insert domain"/>
    <property type="match status" value="1"/>
</dbReference>
<dbReference type="Gene3D" id="3.40.50.150">
    <property type="entry name" value="Vaccinia Virus protein VP39"/>
    <property type="match status" value="1"/>
</dbReference>
<dbReference type="HAMAP" id="MF_01007">
    <property type="entry name" value="16SrRNA_methyltr_H"/>
    <property type="match status" value="1"/>
</dbReference>
<dbReference type="InterPro" id="IPR002903">
    <property type="entry name" value="RsmH"/>
</dbReference>
<dbReference type="InterPro" id="IPR023397">
    <property type="entry name" value="SAM-dep_MeTrfase_MraW_recog"/>
</dbReference>
<dbReference type="InterPro" id="IPR029063">
    <property type="entry name" value="SAM-dependent_MTases_sf"/>
</dbReference>
<dbReference type="NCBIfam" id="TIGR00006">
    <property type="entry name" value="16S rRNA (cytosine(1402)-N(4))-methyltransferase RsmH"/>
    <property type="match status" value="1"/>
</dbReference>
<dbReference type="PANTHER" id="PTHR11265:SF0">
    <property type="entry name" value="12S RRNA N4-METHYLCYTIDINE METHYLTRANSFERASE"/>
    <property type="match status" value="1"/>
</dbReference>
<dbReference type="PANTHER" id="PTHR11265">
    <property type="entry name" value="S-ADENOSYL-METHYLTRANSFERASE MRAW"/>
    <property type="match status" value="1"/>
</dbReference>
<dbReference type="Pfam" id="PF01795">
    <property type="entry name" value="Methyltransf_5"/>
    <property type="match status" value="1"/>
</dbReference>
<dbReference type="PIRSF" id="PIRSF004486">
    <property type="entry name" value="MraW"/>
    <property type="match status" value="1"/>
</dbReference>
<dbReference type="SUPFAM" id="SSF81799">
    <property type="entry name" value="Putative methyltransferase TM0872, insert domain"/>
    <property type="match status" value="1"/>
</dbReference>
<dbReference type="SUPFAM" id="SSF53335">
    <property type="entry name" value="S-adenosyl-L-methionine-dependent methyltransferases"/>
    <property type="match status" value="1"/>
</dbReference>
<gene>
    <name evidence="1" type="primary">rsmH</name>
    <name type="synonym">mraW</name>
    <name type="ordered locus">FTT_0695</name>
</gene>